<protein>
    <recommendedName>
        <fullName evidence="1">Acetyl-coenzyme A carboxylase carboxyl transferase subunit beta</fullName>
        <shortName evidence="1">ACCase subunit beta</shortName>
        <shortName evidence="1">Acetyl-CoA carboxylase carboxyltransferase subunit beta</shortName>
        <ecNumber evidence="1">2.1.3.15</ecNumber>
    </recommendedName>
</protein>
<reference key="1">
    <citation type="journal article" date="2007" name="J. Bacteriol.">
        <title>Genome of the opportunistic pathogen Streptococcus sanguinis.</title>
        <authorList>
            <person name="Xu P."/>
            <person name="Alves J.M."/>
            <person name="Kitten T."/>
            <person name="Brown A."/>
            <person name="Chen Z."/>
            <person name="Ozaki L.S."/>
            <person name="Manque P."/>
            <person name="Ge X."/>
            <person name="Serrano M.G."/>
            <person name="Puiu D."/>
            <person name="Hendricks S."/>
            <person name="Wang Y."/>
            <person name="Chaplin M.D."/>
            <person name="Akan D."/>
            <person name="Paik S."/>
            <person name="Peterson D.L."/>
            <person name="Macrina F.L."/>
            <person name="Buck G.A."/>
        </authorList>
    </citation>
    <scope>NUCLEOTIDE SEQUENCE [LARGE SCALE GENOMIC DNA]</scope>
    <source>
        <strain>SK36</strain>
    </source>
</reference>
<comment type="function">
    <text evidence="1">Component of the acetyl coenzyme A carboxylase (ACC) complex. Biotin carboxylase (BC) catalyzes the carboxylation of biotin on its carrier protein (BCCP) and then the CO(2) group is transferred by the transcarboxylase to acetyl-CoA to form malonyl-CoA.</text>
</comment>
<comment type="catalytic activity">
    <reaction evidence="1">
        <text>N(6)-carboxybiotinyl-L-lysyl-[protein] + acetyl-CoA = N(6)-biotinyl-L-lysyl-[protein] + malonyl-CoA</text>
        <dbReference type="Rhea" id="RHEA:54728"/>
        <dbReference type="Rhea" id="RHEA-COMP:10505"/>
        <dbReference type="Rhea" id="RHEA-COMP:10506"/>
        <dbReference type="ChEBI" id="CHEBI:57288"/>
        <dbReference type="ChEBI" id="CHEBI:57384"/>
        <dbReference type="ChEBI" id="CHEBI:83144"/>
        <dbReference type="ChEBI" id="CHEBI:83145"/>
        <dbReference type="EC" id="2.1.3.15"/>
    </reaction>
</comment>
<comment type="cofactor">
    <cofactor evidence="1">
        <name>Zn(2+)</name>
        <dbReference type="ChEBI" id="CHEBI:29105"/>
    </cofactor>
    <text evidence="1">Binds 1 zinc ion per subunit.</text>
</comment>
<comment type="pathway">
    <text evidence="1">Lipid metabolism; malonyl-CoA biosynthesis; malonyl-CoA from acetyl-CoA: step 1/1.</text>
</comment>
<comment type="subunit">
    <text evidence="1">Acetyl-CoA carboxylase is a heterohexamer composed of biotin carboxyl carrier protein (AccB), biotin carboxylase (AccC) and two subunits each of ACCase subunit alpha (AccA) and ACCase subunit beta (AccD).</text>
</comment>
<comment type="subcellular location">
    <subcellularLocation>
        <location evidence="1">Cytoplasm</location>
    </subcellularLocation>
</comment>
<comment type="similarity">
    <text evidence="1">Belongs to the AccD/PCCB family.</text>
</comment>
<organism>
    <name type="scientific">Streptococcus sanguinis (strain SK36)</name>
    <dbReference type="NCBI Taxonomy" id="388919"/>
    <lineage>
        <taxon>Bacteria</taxon>
        <taxon>Bacillati</taxon>
        <taxon>Bacillota</taxon>
        <taxon>Bacilli</taxon>
        <taxon>Lactobacillales</taxon>
        <taxon>Streptococcaceae</taxon>
        <taxon>Streptococcus</taxon>
    </lineage>
</organism>
<dbReference type="EC" id="2.1.3.15" evidence="1"/>
<dbReference type="EMBL" id="CP000387">
    <property type="protein sequence ID" value="ABN45306.1"/>
    <property type="molecule type" value="Genomic_DNA"/>
</dbReference>
<dbReference type="RefSeq" id="WP_002901174.1">
    <property type="nucleotide sequence ID" value="NZ_CAXTYR010000004.1"/>
</dbReference>
<dbReference type="RefSeq" id="YP_001035856.1">
    <property type="nucleotide sequence ID" value="NC_009009.1"/>
</dbReference>
<dbReference type="SMR" id="A3CQ51"/>
<dbReference type="STRING" id="388919.SSA_1931"/>
<dbReference type="GeneID" id="48424891"/>
<dbReference type="KEGG" id="ssa:SSA_1931"/>
<dbReference type="PATRIC" id="fig|388919.9.peg.1830"/>
<dbReference type="eggNOG" id="COG0777">
    <property type="taxonomic scope" value="Bacteria"/>
</dbReference>
<dbReference type="HOGENOM" id="CLU_015486_1_1_9"/>
<dbReference type="OrthoDB" id="9772975at2"/>
<dbReference type="UniPathway" id="UPA00655">
    <property type="reaction ID" value="UER00711"/>
</dbReference>
<dbReference type="Proteomes" id="UP000002148">
    <property type="component" value="Chromosome"/>
</dbReference>
<dbReference type="GO" id="GO:0009317">
    <property type="term" value="C:acetyl-CoA carboxylase complex"/>
    <property type="evidence" value="ECO:0007669"/>
    <property type="project" value="InterPro"/>
</dbReference>
<dbReference type="GO" id="GO:0003989">
    <property type="term" value="F:acetyl-CoA carboxylase activity"/>
    <property type="evidence" value="ECO:0007669"/>
    <property type="project" value="InterPro"/>
</dbReference>
<dbReference type="GO" id="GO:0005524">
    <property type="term" value="F:ATP binding"/>
    <property type="evidence" value="ECO:0007669"/>
    <property type="project" value="UniProtKB-KW"/>
</dbReference>
<dbReference type="GO" id="GO:0016743">
    <property type="term" value="F:carboxyl- or carbamoyltransferase activity"/>
    <property type="evidence" value="ECO:0007669"/>
    <property type="project" value="UniProtKB-UniRule"/>
</dbReference>
<dbReference type="GO" id="GO:0008270">
    <property type="term" value="F:zinc ion binding"/>
    <property type="evidence" value="ECO:0007669"/>
    <property type="project" value="UniProtKB-UniRule"/>
</dbReference>
<dbReference type="GO" id="GO:0006633">
    <property type="term" value="P:fatty acid biosynthetic process"/>
    <property type="evidence" value="ECO:0007669"/>
    <property type="project" value="UniProtKB-KW"/>
</dbReference>
<dbReference type="GO" id="GO:2001295">
    <property type="term" value="P:malonyl-CoA biosynthetic process"/>
    <property type="evidence" value="ECO:0007669"/>
    <property type="project" value="UniProtKB-UniRule"/>
</dbReference>
<dbReference type="Gene3D" id="3.90.226.10">
    <property type="entry name" value="2-enoyl-CoA Hydratase, Chain A, domain 1"/>
    <property type="match status" value="1"/>
</dbReference>
<dbReference type="HAMAP" id="MF_01395">
    <property type="entry name" value="AcetylCoA_CT_beta"/>
    <property type="match status" value="1"/>
</dbReference>
<dbReference type="InterPro" id="IPR034733">
    <property type="entry name" value="AcCoA_carboxyl_beta"/>
</dbReference>
<dbReference type="InterPro" id="IPR000438">
    <property type="entry name" value="Acetyl_CoA_COase_Trfase_b_su"/>
</dbReference>
<dbReference type="InterPro" id="IPR029045">
    <property type="entry name" value="ClpP/crotonase-like_dom_sf"/>
</dbReference>
<dbReference type="InterPro" id="IPR011762">
    <property type="entry name" value="COA_CT_N"/>
</dbReference>
<dbReference type="InterPro" id="IPR041010">
    <property type="entry name" value="Znf-ACC"/>
</dbReference>
<dbReference type="NCBIfam" id="TIGR00515">
    <property type="entry name" value="accD"/>
    <property type="match status" value="1"/>
</dbReference>
<dbReference type="PANTHER" id="PTHR42995">
    <property type="entry name" value="ACETYL-COENZYME A CARBOXYLASE CARBOXYL TRANSFERASE SUBUNIT BETA, CHLOROPLASTIC"/>
    <property type="match status" value="1"/>
</dbReference>
<dbReference type="PANTHER" id="PTHR42995:SF5">
    <property type="entry name" value="ACETYL-COENZYME A CARBOXYLASE CARBOXYL TRANSFERASE SUBUNIT BETA, CHLOROPLASTIC"/>
    <property type="match status" value="1"/>
</dbReference>
<dbReference type="Pfam" id="PF01039">
    <property type="entry name" value="Carboxyl_trans"/>
    <property type="match status" value="1"/>
</dbReference>
<dbReference type="Pfam" id="PF17848">
    <property type="entry name" value="Zn_ribbon_ACC"/>
    <property type="match status" value="1"/>
</dbReference>
<dbReference type="PRINTS" id="PR01070">
    <property type="entry name" value="ACCCTRFRASEB"/>
</dbReference>
<dbReference type="SUPFAM" id="SSF52096">
    <property type="entry name" value="ClpP/crotonase"/>
    <property type="match status" value="1"/>
</dbReference>
<dbReference type="PROSITE" id="PS50980">
    <property type="entry name" value="COA_CT_NTER"/>
    <property type="match status" value="1"/>
</dbReference>
<sequence length="287" mass="31581">MALFSKKDKYIRINPNRASREKPQAKPEVPDELFSKCPGCKHTIYQKDLGNDSVCPNCGYNFRISAHERLNLTVDENSFEEMFTGIETKDPLNFPNYQEKLALTREKTGLDEAVLTGTASIKGHKTALGIMDSNFIMASMGTVVGEKITRLFEYATEHKLPVVLFTASGGARMQEGIMSLMQMAKVSAAVQRHSAAGLFYLTVLTDPTTGGVTASFAMEGDIILAETQALVGFAGRRVIESTVREKLPDDFQKAEFLMEHGFVDAIVKRGDMRDTLATLLAFHGGQA</sequence>
<proteinExistence type="inferred from homology"/>
<keyword id="KW-0067">ATP-binding</keyword>
<keyword id="KW-0963">Cytoplasm</keyword>
<keyword id="KW-0275">Fatty acid biosynthesis</keyword>
<keyword id="KW-0276">Fatty acid metabolism</keyword>
<keyword id="KW-0444">Lipid biosynthesis</keyword>
<keyword id="KW-0443">Lipid metabolism</keyword>
<keyword id="KW-0479">Metal-binding</keyword>
<keyword id="KW-0547">Nucleotide-binding</keyword>
<keyword id="KW-1185">Reference proteome</keyword>
<keyword id="KW-0808">Transferase</keyword>
<keyword id="KW-0862">Zinc</keyword>
<keyword id="KW-0863">Zinc-finger</keyword>
<feature type="chain" id="PRO_0000389884" description="Acetyl-coenzyme A carboxylase carboxyl transferase subunit beta">
    <location>
        <begin position="1"/>
        <end position="287"/>
    </location>
</feature>
<feature type="domain" description="CoA carboxyltransferase N-terminal" evidence="2">
    <location>
        <begin position="33"/>
        <end position="287"/>
    </location>
</feature>
<feature type="zinc finger region" description="C4-type" evidence="1">
    <location>
        <begin position="37"/>
        <end position="58"/>
    </location>
</feature>
<feature type="binding site" evidence="1">
    <location>
        <position position="37"/>
    </location>
    <ligand>
        <name>Zn(2+)</name>
        <dbReference type="ChEBI" id="CHEBI:29105"/>
    </ligand>
</feature>
<feature type="binding site" evidence="1">
    <location>
        <position position="40"/>
    </location>
    <ligand>
        <name>Zn(2+)</name>
        <dbReference type="ChEBI" id="CHEBI:29105"/>
    </ligand>
</feature>
<feature type="binding site" evidence="1">
    <location>
        <position position="55"/>
    </location>
    <ligand>
        <name>Zn(2+)</name>
        <dbReference type="ChEBI" id="CHEBI:29105"/>
    </ligand>
</feature>
<feature type="binding site" evidence="1">
    <location>
        <position position="58"/>
    </location>
    <ligand>
        <name>Zn(2+)</name>
        <dbReference type="ChEBI" id="CHEBI:29105"/>
    </ligand>
</feature>
<accession>A3CQ51</accession>
<evidence type="ECO:0000255" key="1">
    <source>
        <dbReference type="HAMAP-Rule" id="MF_01395"/>
    </source>
</evidence>
<evidence type="ECO:0000255" key="2">
    <source>
        <dbReference type="PROSITE-ProRule" id="PRU01136"/>
    </source>
</evidence>
<gene>
    <name evidence="1" type="primary">accD</name>
    <name type="ordered locus">SSA_1931</name>
</gene>
<name>ACCD_STRSV</name>